<name>MUTS_SHEB5</name>
<accession>A3D786</accession>
<sequence length="856" mass="95270">MNVIDTDDLEKHTPMMRQYLTMKAEHHDMLLFYRMGDFYELFYDDAKRASELLGISLTARGKSGGDPIPMAGLPYHAVEGYLAKLVQIGQSVAICEQIGDPATSKGPVERKVVRIVTPGTLTDEALLQERQDNLLAAVYQGKIGFGYATLDVSSGRFVIAELDTRESLEAELQRTNPVEILYSEDFGELGLLNGFKGKRRRPEWEFDYDTSIKLLLAQFGTKDLHGFGIADARLSLQAAGCLMQYVKDTQRTALPHINAITRFNQTDSIVLDAATRRNLELTQNLAGGRDNTLAAVLDNTATPMGSRILQRWIHQPLRDPKHIQARQQAVTELLDTAAHEGLHEQLKALGDIERIMARLALRTARPRDFARLRQALGLLPELQKSLSTLSAPHTTQLRQHLGEFPAEQALLERAIVDNPPMLIRDGGVIREGYNSELDEWRGLSEGASDYLVQLEAREKERTGINTLKVGYNRVHGYYIEVSRLQSSQVPLNYQRRQTLKNMERYITPELKEYEEKVLSSQGKALALEKQLWEQLFDLILPKLHELQAFARAAAELDVLSNFAERAETLGYTCPELSQDIGVQIEAGRHPVVERVSQTPFIANPVTLHNQRRMLIVTGPNMGGKSTYMRQVALITLMAHIGCFVPAGRALIGPIDRIFTRIGASDDLASGRSTFMVEMTETANILHNATASSLVLMDEIGRGTSTYDGLSLAWSAAEYLAQQVGAMTLFATHYFELTQLPELMAGVYNVHLDAIEHDDTIAFMHTVQEGAASKSYGLQVAALAGVPNKVIKAAKHKLQQLESRDHQAEGTRTPIQSLLALPEPVENPALTKLSSINPDNLTPKQALDLLYELKRLS</sequence>
<gene>
    <name evidence="1" type="primary">mutS</name>
    <name type="ordered locus">Sbal_3118</name>
</gene>
<reference key="1">
    <citation type="submission" date="2007-02" db="EMBL/GenBank/DDBJ databases">
        <title>Complete sequence of chromosome of Shewanella baltica OS155.</title>
        <authorList>
            <consortium name="US DOE Joint Genome Institute"/>
            <person name="Copeland A."/>
            <person name="Lucas S."/>
            <person name="Lapidus A."/>
            <person name="Barry K."/>
            <person name="Detter J.C."/>
            <person name="Glavina del Rio T."/>
            <person name="Hammon N."/>
            <person name="Israni S."/>
            <person name="Dalin E."/>
            <person name="Tice H."/>
            <person name="Pitluck S."/>
            <person name="Sims D.R."/>
            <person name="Brettin T."/>
            <person name="Bruce D."/>
            <person name="Han C."/>
            <person name="Tapia R."/>
            <person name="Brainard J."/>
            <person name="Schmutz J."/>
            <person name="Larimer F."/>
            <person name="Land M."/>
            <person name="Hauser L."/>
            <person name="Kyrpides N."/>
            <person name="Mikhailova N."/>
            <person name="Brettar I."/>
            <person name="Klappenbach J."/>
            <person name="Konstantinidis K."/>
            <person name="Rodrigues J."/>
            <person name="Tiedje J."/>
            <person name="Richardson P."/>
        </authorList>
    </citation>
    <scope>NUCLEOTIDE SEQUENCE [LARGE SCALE GENOMIC DNA]</scope>
    <source>
        <strain>OS155 / ATCC BAA-1091</strain>
    </source>
</reference>
<protein>
    <recommendedName>
        <fullName evidence="1">DNA mismatch repair protein MutS</fullName>
    </recommendedName>
</protein>
<proteinExistence type="inferred from homology"/>
<evidence type="ECO:0000255" key="1">
    <source>
        <dbReference type="HAMAP-Rule" id="MF_00096"/>
    </source>
</evidence>
<keyword id="KW-0067">ATP-binding</keyword>
<keyword id="KW-0227">DNA damage</keyword>
<keyword id="KW-0234">DNA repair</keyword>
<keyword id="KW-0238">DNA-binding</keyword>
<keyword id="KW-0547">Nucleotide-binding</keyword>
<keyword id="KW-1185">Reference proteome</keyword>
<comment type="function">
    <text evidence="1">This protein is involved in the repair of mismatches in DNA. It is possible that it carries out the mismatch recognition step. This protein has a weak ATPase activity.</text>
</comment>
<comment type="similarity">
    <text evidence="1">Belongs to the DNA mismatch repair MutS family.</text>
</comment>
<feature type="chain" id="PRO_1000008091" description="DNA mismatch repair protein MutS">
    <location>
        <begin position="1"/>
        <end position="856"/>
    </location>
</feature>
<feature type="binding site" evidence="1">
    <location>
        <begin position="618"/>
        <end position="625"/>
    </location>
    <ligand>
        <name>ATP</name>
        <dbReference type="ChEBI" id="CHEBI:30616"/>
    </ligand>
</feature>
<dbReference type="EMBL" id="CP000563">
    <property type="protein sequence ID" value="ABN62599.1"/>
    <property type="molecule type" value="Genomic_DNA"/>
</dbReference>
<dbReference type="RefSeq" id="WP_011847433.1">
    <property type="nucleotide sequence ID" value="NC_009052.1"/>
</dbReference>
<dbReference type="SMR" id="A3D786"/>
<dbReference type="STRING" id="325240.Sbal_3118"/>
<dbReference type="KEGG" id="sbl:Sbal_3118"/>
<dbReference type="HOGENOM" id="CLU_002472_4_0_6"/>
<dbReference type="OrthoDB" id="9802448at2"/>
<dbReference type="Proteomes" id="UP000001557">
    <property type="component" value="Chromosome"/>
</dbReference>
<dbReference type="GO" id="GO:0005829">
    <property type="term" value="C:cytosol"/>
    <property type="evidence" value="ECO:0007669"/>
    <property type="project" value="TreeGrafter"/>
</dbReference>
<dbReference type="GO" id="GO:0005524">
    <property type="term" value="F:ATP binding"/>
    <property type="evidence" value="ECO:0007669"/>
    <property type="project" value="UniProtKB-UniRule"/>
</dbReference>
<dbReference type="GO" id="GO:0140664">
    <property type="term" value="F:ATP-dependent DNA damage sensor activity"/>
    <property type="evidence" value="ECO:0007669"/>
    <property type="project" value="InterPro"/>
</dbReference>
<dbReference type="GO" id="GO:0003684">
    <property type="term" value="F:damaged DNA binding"/>
    <property type="evidence" value="ECO:0007669"/>
    <property type="project" value="UniProtKB-UniRule"/>
</dbReference>
<dbReference type="GO" id="GO:0030983">
    <property type="term" value="F:mismatched DNA binding"/>
    <property type="evidence" value="ECO:0007669"/>
    <property type="project" value="InterPro"/>
</dbReference>
<dbReference type="GO" id="GO:0006298">
    <property type="term" value="P:mismatch repair"/>
    <property type="evidence" value="ECO:0007669"/>
    <property type="project" value="UniProtKB-UniRule"/>
</dbReference>
<dbReference type="CDD" id="cd03284">
    <property type="entry name" value="ABC_MutS1"/>
    <property type="match status" value="1"/>
</dbReference>
<dbReference type="FunFam" id="1.10.1420.10:FF:000002">
    <property type="entry name" value="DNA mismatch repair protein MutS"/>
    <property type="match status" value="1"/>
</dbReference>
<dbReference type="FunFam" id="3.30.420.110:FF:000001">
    <property type="entry name" value="DNA mismatch repair protein MutS"/>
    <property type="match status" value="1"/>
</dbReference>
<dbReference type="FunFam" id="3.40.1170.10:FF:000001">
    <property type="entry name" value="DNA mismatch repair protein MutS"/>
    <property type="match status" value="1"/>
</dbReference>
<dbReference type="FunFam" id="3.40.50.300:FF:000283">
    <property type="entry name" value="DNA mismatch repair protein MutS"/>
    <property type="match status" value="1"/>
</dbReference>
<dbReference type="Gene3D" id="1.10.1420.10">
    <property type="match status" value="2"/>
</dbReference>
<dbReference type="Gene3D" id="6.10.140.430">
    <property type="match status" value="1"/>
</dbReference>
<dbReference type="Gene3D" id="3.40.1170.10">
    <property type="entry name" value="DNA repair protein MutS, domain I"/>
    <property type="match status" value="1"/>
</dbReference>
<dbReference type="Gene3D" id="3.30.420.110">
    <property type="entry name" value="MutS, connector domain"/>
    <property type="match status" value="1"/>
</dbReference>
<dbReference type="Gene3D" id="3.40.50.300">
    <property type="entry name" value="P-loop containing nucleotide triphosphate hydrolases"/>
    <property type="match status" value="1"/>
</dbReference>
<dbReference type="HAMAP" id="MF_00096">
    <property type="entry name" value="MutS"/>
    <property type="match status" value="1"/>
</dbReference>
<dbReference type="InterPro" id="IPR005748">
    <property type="entry name" value="DNA_mismatch_repair_MutS"/>
</dbReference>
<dbReference type="InterPro" id="IPR007695">
    <property type="entry name" value="DNA_mismatch_repair_MutS-lik_N"/>
</dbReference>
<dbReference type="InterPro" id="IPR017261">
    <property type="entry name" value="DNA_mismatch_repair_MutS/MSH"/>
</dbReference>
<dbReference type="InterPro" id="IPR000432">
    <property type="entry name" value="DNA_mismatch_repair_MutS_C"/>
</dbReference>
<dbReference type="InterPro" id="IPR007861">
    <property type="entry name" value="DNA_mismatch_repair_MutS_clamp"/>
</dbReference>
<dbReference type="InterPro" id="IPR007696">
    <property type="entry name" value="DNA_mismatch_repair_MutS_core"/>
</dbReference>
<dbReference type="InterPro" id="IPR016151">
    <property type="entry name" value="DNA_mismatch_repair_MutS_N"/>
</dbReference>
<dbReference type="InterPro" id="IPR036187">
    <property type="entry name" value="DNA_mismatch_repair_MutS_sf"/>
</dbReference>
<dbReference type="InterPro" id="IPR007860">
    <property type="entry name" value="DNA_mmatch_repair_MutS_con_dom"/>
</dbReference>
<dbReference type="InterPro" id="IPR045076">
    <property type="entry name" value="MutS"/>
</dbReference>
<dbReference type="InterPro" id="IPR036678">
    <property type="entry name" value="MutS_con_dom_sf"/>
</dbReference>
<dbReference type="InterPro" id="IPR027417">
    <property type="entry name" value="P-loop_NTPase"/>
</dbReference>
<dbReference type="NCBIfam" id="TIGR01070">
    <property type="entry name" value="mutS1"/>
    <property type="match status" value="1"/>
</dbReference>
<dbReference type="NCBIfam" id="NF003810">
    <property type="entry name" value="PRK05399.1"/>
    <property type="match status" value="1"/>
</dbReference>
<dbReference type="PANTHER" id="PTHR11361:SF34">
    <property type="entry name" value="DNA MISMATCH REPAIR PROTEIN MSH1, MITOCHONDRIAL"/>
    <property type="match status" value="1"/>
</dbReference>
<dbReference type="PANTHER" id="PTHR11361">
    <property type="entry name" value="DNA MISMATCH REPAIR PROTEIN MUTS FAMILY MEMBER"/>
    <property type="match status" value="1"/>
</dbReference>
<dbReference type="Pfam" id="PF01624">
    <property type="entry name" value="MutS_I"/>
    <property type="match status" value="1"/>
</dbReference>
<dbReference type="Pfam" id="PF05188">
    <property type="entry name" value="MutS_II"/>
    <property type="match status" value="1"/>
</dbReference>
<dbReference type="Pfam" id="PF05192">
    <property type="entry name" value="MutS_III"/>
    <property type="match status" value="1"/>
</dbReference>
<dbReference type="Pfam" id="PF05190">
    <property type="entry name" value="MutS_IV"/>
    <property type="match status" value="1"/>
</dbReference>
<dbReference type="Pfam" id="PF00488">
    <property type="entry name" value="MutS_V"/>
    <property type="match status" value="1"/>
</dbReference>
<dbReference type="PIRSF" id="PIRSF037677">
    <property type="entry name" value="DNA_mis_repair_Msh6"/>
    <property type="match status" value="1"/>
</dbReference>
<dbReference type="SMART" id="SM00534">
    <property type="entry name" value="MUTSac"/>
    <property type="match status" value="1"/>
</dbReference>
<dbReference type="SMART" id="SM00533">
    <property type="entry name" value="MUTSd"/>
    <property type="match status" value="1"/>
</dbReference>
<dbReference type="SUPFAM" id="SSF55271">
    <property type="entry name" value="DNA repair protein MutS, domain I"/>
    <property type="match status" value="1"/>
</dbReference>
<dbReference type="SUPFAM" id="SSF53150">
    <property type="entry name" value="DNA repair protein MutS, domain II"/>
    <property type="match status" value="1"/>
</dbReference>
<dbReference type="SUPFAM" id="SSF48334">
    <property type="entry name" value="DNA repair protein MutS, domain III"/>
    <property type="match status" value="1"/>
</dbReference>
<dbReference type="SUPFAM" id="SSF52540">
    <property type="entry name" value="P-loop containing nucleoside triphosphate hydrolases"/>
    <property type="match status" value="1"/>
</dbReference>
<dbReference type="PROSITE" id="PS00486">
    <property type="entry name" value="DNA_MISMATCH_REPAIR_2"/>
    <property type="match status" value="1"/>
</dbReference>
<organism>
    <name type="scientific">Shewanella baltica (strain OS155 / ATCC BAA-1091)</name>
    <dbReference type="NCBI Taxonomy" id="325240"/>
    <lineage>
        <taxon>Bacteria</taxon>
        <taxon>Pseudomonadati</taxon>
        <taxon>Pseudomonadota</taxon>
        <taxon>Gammaproteobacteria</taxon>
        <taxon>Alteromonadales</taxon>
        <taxon>Shewanellaceae</taxon>
        <taxon>Shewanella</taxon>
    </lineage>
</organism>